<dbReference type="EC" id="2.5.1.16" evidence="1"/>
<dbReference type="EMBL" id="BX548174">
    <property type="protein sequence ID" value="CAE20144.1"/>
    <property type="molecule type" value="Genomic_DNA"/>
</dbReference>
<dbReference type="RefSeq" id="WP_011133312.1">
    <property type="nucleotide sequence ID" value="NC_005072.1"/>
</dbReference>
<dbReference type="SMR" id="Q7UZI0"/>
<dbReference type="STRING" id="59919.PMM1685"/>
<dbReference type="KEGG" id="pmm:PMM1685"/>
<dbReference type="eggNOG" id="COG0421">
    <property type="taxonomic scope" value="Bacteria"/>
</dbReference>
<dbReference type="HOGENOM" id="CLU_048199_0_0_3"/>
<dbReference type="OrthoDB" id="9793120at2"/>
<dbReference type="UniPathway" id="UPA00248">
    <property type="reaction ID" value="UER00314"/>
</dbReference>
<dbReference type="Proteomes" id="UP000001026">
    <property type="component" value="Chromosome"/>
</dbReference>
<dbReference type="GO" id="GO:0005737">
    <property type="term" value="C:cytoplasm"/>
    <property type="evidence" value="ECO:0007669"/>
    <property type="project" value="UniProtKB-SubCell"/>
</dbReference>
<dbReference type="GO" id="GO:0004766">
    <property type="term" value="F:spermidine synthase activity"/>
    <property type="evidence" value="ECO:0007669"/>
    <property type="project" value="UniProtKB-UniRule"/>
</dbReference>
<dbReference type="GO" id="GO:0008295">
    <property type="term" value="P:spermidine biosynthetic process"/>
    <property type="evidence" value="ECO:0007669"/>
    <property type="project" value="UniProtKB-UniRule"/>
</dbReference>
<dbReference type="CDD" id="cd02440">
    <property type="entry name" value="AdoMet_MTases"/>
    <property type="match status" value="1"/>
</dbReference>
<dbReference type="Gene3D" id="2.30.140.10">
    <property type="entry name" value="Spermidine synthase, tetramerisation domain"/>
    <property type="match status" value="1"/>
</dbReference>
<dbReference type="Gene3D" id="3.40.50.150">
    <property type="entry name" value="Vaccinia Virus protein VP39"/>
    <property type="match status" value="1"/>
</dbReference>
<dbReference type="HAMAP" id="MF_00198">
    <property type="entry name" value="Spermidine_synth"/>
    <property type="match status" value="1"/>
</dbReference>
<dbReference type="InterPro" id="IPR030374">
    <property type="entry name" value="PABS"/>
</dbReference>
<dbReference type="InterPro" id="IPR030373">
    <property type="entry name" value="PABS_CS"/>
</dbReference>
<dbReference type="InterPro" id="IPR029063">
    <property type="entry name" value="SAM-dependent_MTases_sf"/>
</dbReference>
<dbReference type="InterPro" id="IPR001045">
    <property type="entry name" value="Spermi_synthase"/>
</dbReference>
<dbReference type="InterPro" id="IPR035246">
    <property type="entry name" value="Spermidine_synt_N"/>
</dbReference>
<dbReference type="InterPro" id="IPR037163">
    <property type="entry name" value="Spermidine_synt_N_sf"/>
</dbReference>
<dbReference type="NCBIfam" id="NF002010">
    <property type="entry name" value="PRK00811.1"/>
    <property type="match status" value="1"/>
</dbReference>
<dbReference type="PANTHER" id="PTHR11558:SF11">
    <property type="entry name" value="SPERMIDINE SYNTHASE"/>
    <property type="match status" value="1"/>
</dbReference>
<dbReference type="PANTHER" id="PTHR11558">
    <property type="entry name" value="SPERMIDINE/SPERMINE SYNTHASE"/>
    <property type="match status" value="1"/>
</dbReference>
<dbReference type="Pfam" id="PF17284">
    <property type="entry name" value="Spermine_synt_N"/>
    <property type="match status" value="1"/>
</dbReference>
<dbReference type="Pfam" id="PF01564">
    <property type="entry name" value="Spermine_synth"/>
    <property type="match status" value="1"/>
</dbReference>
<dbReference type="SUPFAM" id="SSF53335">
    <property type="entry name" value="S-adenosyl-L-methionine-dependent methyltransferases"/>
    <property type="match status" value="1"/>
</dbReference>
<dbReference type="PROSITE" id="PS01330">
    <property type="entry name" value="PABS_1"/>
    <property type="match status" value="1"/>
</dbReference>
<dbReference type="PROSITE" id="PS51006">
    <property type="entry name" value="PABS_2"/>
    <property type="match status" value="1"/>
</dbReference>
<sequence length="283" mass="32518">MKDMPTWIDEYHKGSRFGLNGKVLLKKNSKYQEILIIETDFYGKALMLDGCWMTSVRDEKYYHECLVHPALSSIDKKSHILIIGGGDGGTARECLKYSQVSKIDLVEIDEEVIKVSKTFLKEIGGGAWSDKRLAIHIDDGVKWVETTKDNSYDVIFIDCSDPSEFSNLLFTDSFYKECKRILTKKGILATQSESPESFENIHIHILKSLNKIFKLSETMYSFVPIYPSGIWSWTFASDEELNLSKVNYKEVMEIENNCDVWNLNFQNAAFKMMPNKIVKKLNS</sequence>
<accession>Q7UZI0</accession>
<reference key="1">
    <citation type="journal article" date="2003" name="Nature">
        <title>Genome divergence in two Prochlorococcus ecotypes reflects oceanic niche differentiation.</title>
        <authorList>
            <person name="Rocap G."/>
            <person name="Larimer F.W."/>
            <person name="Lamerdin J.E."/>
            <person name="Malfatti S."/>
            <person name="Chain P."/>
            <person name="Ahlgren N.A."/>
            <person name="Arellano A."/>
            <person name="Coleman M."/>
            <person name="Hauser L."/>
            <person name="Hess W.R."/>
            <person name="Johnson Z.I."/>
            <person name="Land M.L."/>
            <person name="Lindell D."/>
            <person name="Post A.F."/>
            <person name="Regala W."/>
            <person name="Shah M."/>
            <person name="Shaw S.L."/>
            <person name="Steglich C."/>
            <person name="Sullivan M.B."/>
            <person name="Ting C.S."/>
            <person name="Tolonen A."/>
            <person name="Webb E.A."/>
            <person name="Zinser E.R."/>
            <person name="Chisholm S.W."/>
        </authorList>
    </citation>
    <scope>NUCLEOTIDE SEQUENCE [LARGE SCALE GENOMIC DNA]</scope>
    <source>
        <strain>CCMP1986 / NIES-2087 / MED4</strain>
    </source>
</reference>
<feature type="chain" id="PRO_0000156496" description="Polyamine aminopropyltransferase">
    <location>
        <begin position="1"/>
        <end position="283"/>
    </location>
</feature>
<feature type="domain" description="PABS" evidence="1">
    <location>
        <begin position="5"/>
        <end position="238"/>
    </location>
</feature>
<feature type="active site" description="Proton acceptor" evidence="1">
    <location>
        <position position="158"/>
    </location>
</feature>
<feature type="binding site" evidence="1">
    <location>
        <position position="32"/>
    </location>
    <ligand>
        <name>S-methyl-5'-thioadenosine</name>
        <dbReference type="ChEBI" id="CHEBI:17509"/>
    </ligand>
</feature>
<feature type="binding site" evidence="1">
    <location>
        <position position="63"/>
    </location>
    <ligand>
        <name>spermidine</name>
        <dbReference type="ChEBI" id="CHEBI:57834"/>
    </ligand>
</feature>
<feature type="binding site" evidence="1">
    <location>
        <position position="87"/>
    </location>
    <ligand>
        <name>spermidine</name>
        <dbReference type="ChEBI" id="CHEBI:57834"/>
    </ligand>
</feature>
<feature type="binding site" evidence="1">
    <location>
        <position position="107"/>
    </location>
    <ligand>
        <name>S-methyl-5'-thioadenosine</name>
        <dbReference type="ChEBI" id="CHEBI:17509"/>
    </ligand>
</feature>
<feature type="binding site" evidence="1">
    <location>
        <begin position="139"/>
        <end position="140"/>
    </location>
    <ligand>
        <name>S-methyl-5'-thioadenosine</name>
        <dbReference type="ChEBI" id="CHEBI:17509"/>
    </ligand>
</feature>
<feature type="binding site" evidence="1">
    <location>
        <begin position="158"/>
        <end position="161"/>
    </location>
    <ligand>
        <name>spermidine</name>
        <dbReference type="ChEBI" id="CHEBI:57834"/>
    </ligand>
</feature>
<proteinExistence type="inferred from homology"/>
<gene>
    <name evidence="1" type="primary">speE</name>
    <name type="ordered locus">PMM1685</name>
</gene>
<keyword id="KW-0963">Cytoplasm</keyword>
<keyword id="KW-0620">Polyamine biosynthesis</keyword>
<keyword id="KW-0745">Spermidine biosynthesis</keyword>
<keyword id="KW-0808">Transferase</keyword>
<organism>
    <name type="scientific">Prochlorococcus marinus subsp. pastoris (strain CCMP1986 / NIES-2087 / MED4)</name>
    <dbReference type="NCBI Taxonomy" id="59919"/>
    <lineage>
        <taxon>Bacteria</taxon>
        <taxon>Bacillati</taxon>
        <taxon>Cyanobacteriota</taxon>
        <taxon>Cyanophyceae</taxon>
        <taxon>Synechococcales</taxon>
        <taxon>Prochlorococcaceae</taxon>
        <taxon>Prochlorococcus</taxon>
    </lineage>
</organism>
<comment type="function">
    <text evidence="1">Catalyzes the irreversible transfer of a propylamine group from the amino donor S-adenosylmethioninamine (decarboxy-AdoMet) to putrescine (1,4-diaminobutane) to yield spermidine.</text>
</comment>
<comment type="catalytic activity">
    <reaction evidence="1">
        <text>S-adenosyl 3-(methylsulfanyl)propylamine + putrescine = S-methyl-5'-thioadenosine + spermidine + H(+)</text>
        <dbReference type="Rhea" id="RHEA:12721"/>
        <dbReference type="ChEBI" id="CHEBI:15378"/>
        <dbReference type="ChEBI" id="CHEBI:17509"/>
        <dbReference type="ChEBI" id="CHEBI:57443"/>
        <dbReference type="ChEBI" id="CHEBI:57834"/>
        <dbReference type="ChEBI" id="CHEBI:326268"/>
        <dbReference type="EC" id="2.5.1.16"/>
    </reaction>
</comment>
<comment type="pathway">
    <text evidence="1">Amine and polyamine biosynthesis; spermidine biosynthesis; spermidine from putrescine: step 1/1.</text>
</comment>
<comment type="subunit">
    <text evidence="1">Homodimer or homotetramer.</text>
</comment>
<comment type="subcellular location">
    <subcellularLocation>
        <location evidence="1">Cytoplasm</location>
    </subcellularLocation>
</comment>
<comment type="similarity">
    <text evidence="1">Belongs to the spermidine/spermine synthase family.</text>
</comment>
<evidence type="ECO:0000255" key="1">
    <source>
        <dbReference type="HAMAP-Rule" id="MF_00198"/>
    </source>
</evidence>
<protein>
    <recommendedName>
        <fullName evidence="1">Polyamine aminopropyltransferase</fullName>
    </recommendedName>
    <alternativeName>
        <fullName evidence="1">Putrescine aminopropyltransferase</fullName>
        <shortName evidence="1">PAPT</shortName>
    </alternativeName>
    <alternativeName>
        <fullName evidence="1">Spermidine synthase</fullName>
        <shortName evidence="1">SPDS</shortName>
        <shortName evidence="1">SPDSY</shortName>
        <ecNumber evidence="1">2.5.1.16</ecNumber>
    </alternativeName>
</protein>
<name>SPEE_PROMP</name>